<comment type="function">
    <text evidence="1">Could be a mediator in iron transactions between iron acquisition and iron-requiring processes, such as synthesis and/or repair of Fe-S clusters in biosynthetic enzymes.</text>
</comment>
<comment type="subunit">
    <text evidence="1">Monomer.</text>
</comment>
<comment type="similarity">
    <text evidence="1">Belongs to the Fe(2+)-trafficking protein family.</text>
</comment>
<reference key="1">
    <citation type="journal article" date="2008" name="J. Bacteriol.">
        <title>Insights into the environmental resistance gene pool from the genome sequence of the multidrug-resistant environmental isolate Escherichia coli SMS-3-5.</title>
        <authorList>
            <person name="Fricke W.F."/>
            <person name="Wright M.S."/>
            <person name="Lindell A.H."/>
            <person name="Harkins D.M."/>
            <person name="Baker-Austin C."/>
            <person name="Ravel J."/>
            <person name="Stepanauskas R."/>
        </authorList>
    </citation>
    <scope>NUCLEOTIDE SEQUENCE [LARGE SCALE GENOMIC DNA]</scope>
    <source>
        <strain>SMS-3-5 / SECEC</strain>
    </source>
</reference>
<organism>
    <name type="scientific">Escherichia coli (strain SMS-3-5 / SECEC)</name>
    <dbReference type="NCBI Taxonomy" id="439855"/>
    <lineage>
        <taxon>Bacteria</taxon>
        <taxon>Pseudomonadati</taxon>
        <taxon>Pseudomonadota</taxon>
        <taxon>Gammaproteobacteria</taxon>
        <taxon>Enterobacterales</taxon>
        <taxon>Enterobacteriaceae</taxon>
        <taxon>Escherichia</taxon>
    </lineage>
</organism>
<sequence>MSRTIFCTFLQREAEGQDFQLYPGELGKRIYNEISKEAWAQWQHKQTMLINEKKLNMMNAEHRKLLEQEMVNFLFEGKEVHIEGYTPEDKK</sequence>
<keyword id="KW-0408">Iron</keyword>
<dbReference type="EMBL" id="CP000970">
    <property type="protein sequence ID" value="ACB19724.1"/>
    <property type="molecule type" value="Genomic_DNA"/>
</dbReference>
<dbReference type="RefSeq" id="WP_000091700.1">
    <property type="nucleotide sequence ID" value="NC_010498.1"/>
</dbReference>
<dbReference type="BMRB" id="B1LDH2"/>
<dbReference type="SMR" id="B1LDH2"/>
<dbReference type="KEGG" id="ecm:EcSMS35_3105"/>
<dbReference type="HOGENOM" id="CLU_170994_0_0_6"/>
<dbReference type="Proteomes" id="UP000007011">
    <property type="component" value="Chromosome"/>
</dbReference>
<dbReference type="GO" id="GO:0005829">
    <property type="term" value="C:cytosol"/>
    <property type="evidence" value="ECO:0007669"/>
    <property type="project" value="TreeGrafter"/>
</dbReference>
<dbReference type="GO" id="GO:0005506">
    <property type="term" value="F:iron ion binding"/>
    <property type="evidence" value="ECO:0007669"/>
    <property type="project" value="UniProtKB-UniRule"/>
</dbReference>
<dbReference type="GO" id="GO:0034599">
    <property type="term" value="P:cellular response to oxidative stress"/>
    <property type="evidence" value="ECO:0007669"/>
    <property type="project" value="TreeGrafter"/>
</dbReference>
<dbReference type="FunFam" id="1.10.3880.10:FF:000001">
    <property type="entry name" value="Probable Fe(2+)-trafficking protein"/>
    <property type="match status" value="1"/>
</dbReference>
<dbReference type="Gene3D" id="1.10.3880.10">
    <property type="entry name" value="Fe(II) trafficking protein YggX"/>
    <property type="match status" value="1"/>
</dbReference>
<dbReference type="HAMAP" id="MF_00686">
    <property type="entry name" value="Fe_traffic_YggX"/>
    <property type="match status" value="1"/>
</dbReference>
<dbReference type="InterPro" id="IPR007457">
    <property type="entry name" value="Fe_traffick_prot_YggX"/>
</dbReference>
<dbReference type="InterPro" id="IPR036766">
    <property type="entry name" value="Fe_traffick_prot_YggX_sf"/>
</dbReference>
<dbReference type="NCBIfam" id="NF003817">
    <property type="entry name" value="PRK05408.1"/>
    <property type="match status" value="1"/>
</dbReference>
<dbReference type="PANTHER" id="PTHR36965">
    <property type="entry name" value="FE(2+)-TRAFFICKING PROTEIN-RELATED"/>
    <property type="match status" value="1"/>
</dbReference>
<dbReference type="PANTHER" id="PTHR36965:SF1">
    <property type="entry name" value="FE(2+)-TRAFFICKING PROTEIN-RELATED"/>
    <property type="match status" value="1"/>
</dbReference>
<dbReference type="Pfam" id="PF04362">
    <property type="entry name" value="Iron_traffic"/>
    <property type="match status" value="1"/>
</dbReference>
<dbReference type="PIRSF" id="PIRSF029827">
    <property type="entry name" value="Fe_traffic_YggX"/>
    <property type="match status" value="1"/>
</dbReference>
<dbReference type="SUPFAM" id="SSF111148">
    <property type="entry name" value="YggX-like"/>
    <property type="match status" value="1"/>
</dbReference>
<name>FETP_ECOSM</name>
<feature type="chain" id="PRO_1000131846" description="Probable Fe(2+)-trafficking protein">
    <location>
        <begin position="1"/>
        <end position="91"/>
    </location>
</feature>
<accession>B1LDH2</accession>
<protein>
    <recommendedName>
        <fullName evidence="1">Probable Fe(2+)-trafficking protein</fullName>
    </recommendedName>
</protein>
<evidence type="ECO:0000255" key="1">
    <source>
        <dbReference type="HAMAP-Rule" id="MF_00686"/>
    </source>
</evidence>
<proteinExistence type="inferred from homology"/>
<gene>
    <name evidence="1" type="primary">yggX</name>
    <name type="ordered locus">EcSMS35_3105</name>
</gene>